<reference key="1">
    <citation type="journal article" date="2005" name="Genome Biol.">
        <title>Full-length cDNAs from chicken bursal lymphocytes to facilitate gene function analysis.</title>
        <authorList>
            <person name="Caldwell R.B."/>
            <person name="Kierzek A.M."/>
            <person name="Arakawa H."/>
            <person name="Bezzubov Y."/>
            <person name="Zaim J."/>
            <person name="Fiedler P."/>
            <person name="Kutter S."/>
            <person name="Blagodatski A."/>
            <person name="Kostovska D."/>
            <person name="Koter M."/>
            <person name="Plachy J."/>
            <person name="Carninci P."/>
            <person name="Hayashizaki Y."/>
            <person name="Buerstedde J.-M."/>
        </authorList>
    </citation>
    <scope>NUCLEOTIDE SEQUENCE [LARGE SCALE MRNA]</scope>
    <source>
        <strain>CB</strain>
        <tissue>Bursa of Fabricius</tissue>
    </source>
</reference>
<feature type="chain" id="PRO_0000254537" description="Uracil phosphoribosyltransferase homolog">
    <location>
        <begin position="1"/>
        <end position="277"/>
    </location>
</feature>
<feature type="region of interest" description="Disordered" evidence="3">
    <location>
        <begin position="1"/>
        <end position="69"/>
    </location>
</feature>
<feature type="compositionally biased region" description="Low complexity" evidence="3">
    <location>
        <begin position="37"/>
        <end position="69"/>
    </location>
</feature>
<feature type="binding site" evidence="2">
    <location>
        <position position="101"/>
    </location>
    <ligand>
        <name>GTP</name>
        <dbReference type="ChEBI" id="CHEBI:37565"/>
    </ligand>
</feature>
<feature type="binding site" evidence="2">
    <location>
        <position position="110"/>
    </location>
    <ligand>
        <name>GTP</name>
        <dbReference type="ChEBI" id="CHEBI:37565"/>
    </ligand>
</feature>
<feature type="binding site" evidence="2">
    <location>
        <begin position="144"/>
        <end position="147"/>
    </location>
    <ligand>
        <name>GTP</name>
        <dbReference type="ChEBI" id="CHEBI:37565"/>
    </ligand>
</feature>
<feature type="binding site" evidence="2">
    <location>
        <position position="154"/>
    </location>
    <ligand>
        <name>5-phospho-alpha-D-ribose 1-diphosphate</name>
        <dbReference type="ChEBI" id="CHEBI:58017"/>
    </ligand>
</feature>
<feature type="binding site" evidence="2">
    <location>
        <position position="171"/>
    </location>
    <ligand>
        <name>GTP</name>
        <dbReference type="ChEBI" id="CHEBI:37565"/>
    </ligand>
</feature>
<feature type="binding site" evidence="2">
    <location>
        <position position="200"/>
    </location>
    <ligand>
        <name>GTP</name>
        <dbReference type="ChEBI" id="CHEBI:37565"/>
    </ligand>
</feature>
<feature type="binding site" evidence="2">
    <location>
        <begin position="206"/>
        <end position="214"/>
    </location>
    <ligand>
        <name>5-phospho-alpha-D-ribose 1-diphosphate</name>
        <dbReference type="ChEBI" id="CHEBI:58017"/>
    </ligand>
</feature>
<feature type="binding site" evidence="2">
    <location>
        <begin position="267"/>
        <end position="269"/>
    </location>
    <ligand>
        <name>uracil</name>
        <dbReference type="ChEBI" id="CHEBI:17568"/>
    </ligand>
</feature>
<organism>
    <name type="scientific">Gallus gallus</name>
    <name type="common">Chicken</name>
    <dbReference type="NCBI Taxonomy" id="9031"/>
    <lineage>
        <taxon>Eukaryota</taxon>
        <taxon>Metazoa</taxon>
        <taxon>Chordata</taxon>
        <taxon>Craniata</taxon>
        <taxon>Vertebrata</taxon>
        <taxon>Euteleostomi</taxon>
        <taxon>Archelosauria</taxon>
        <taxon>Archosauria</taxon>
        <taxon>Dinosauria</taxon>
        <taxon>Saurischia</taxon>
        <taxon>Theropoda</taxon>
        <taxon>Coelurosauria</taxon>
        <taxon>Aves</taxon>
        <taxon>Neognathae</taxon>
        <taxon>Galloanserae</taxon>
        <taxon>Galliformes</taxon>
        <taxon>Phasianidae</taxon>
        <taxon>Phasianinae</taxon>
        <taxon>Gallus</taxon>
    </lineage>
</organism>
<sequence length="277" mass="30085">MEAMPCHNQRLGAAGGPRPQDEQTAPAGGCSRLIRFAEPSEGSSSGSPSPDSSSGSNGAAAAPSPAAEDCASPLGAQLKLLPMNDQIRELQTIIRDKTASRGDFVFSADRLIRLVVEERLNQLPYTECTVTTPTGYKYEGVKFEKGNCGVSIMRSGEAMEQGLRDCCRSIRIGKILIQSDEETQRAKVYYAKFPPDIYRRKVLLMYPILSTGNTVIEAVKVLIEHGVQPSVIILLSLFSTPHGAKSIIQEFPEITILTTEVHPVAPTHFGQKYFGTD</sequence>
<evidence type="ECO:0000250" key="1"/>
<evidence type="ECO:0000250" key="2">
    <source>
        <dbReference type="UniProtKB" id="Q26998"/>
    </source>
</evidence>
<evidence type="ECO:0000256" key="3">
    <source>
        <dbReference type="SAM" id="MobiDB-lite"/>
    </source>
</evidence>
<evidence type="ECO:0000305" key="4"/>
<dbReference type="EMBL" id="AJ720786">
    <property type="protein sequence ID" value="CAG32445.1"/>
    <property type="molecule type" value="mRNA"/>
</dbReference>
<dbReference type="RefSeq" id="NP_001026295.1">
    <property type="nucleotide sequence ID" value="NM_001031124.1"/>
</dbReference>
<dbReference type="SMR" id="Q5ZIJ8"/>
<dbReference type="FunCoup" id="Q5ZIJ8">
    <property type="interactions" value="551"/>
</dbReference>
<dbReference type="STRING" id="9031.ENSGALP00000012624"/>
<dbReference type="PaxDb" id="9031-ENSGALP00000012624"/>
<dbReference type="GeneID" id="422327"/>
<dbReference type="KEGG" id="gga:422327"/>
<dbReference type="CTD" id="139596"/>
<dbReference type="VEuPathDB" id="HostDB:geneid_422327"/>
<dbReference type="eggNOG" id="KOG1017">
    <property type="taxonomic scope" value="Eukaryota"/>
</dbReference>
<dbReference type="InParanoid" id="Q5ZIJ8"/>
<dbReference type="OrthoDB" id="106623at2759"/>
<dbReference type="PhylomeDB" id="Q5ZIJ8"/>
<dbReference type="PRO" id="PR:Q5ZIJ8"/>
<dbReference type="Proteomes" id="UP000000539">
    <property type="component" value="Unassembled WGS sequence"/>
</dbReference>
<dbReference type="GO" id="GO:0005737">
    <property type="term" value="C:cytoplasm"/>
    <property type="evidence" value="ECO:0007669"/>
    <property type="project" value="UniProtKB-SubCell"/>
</dbReference>
<dbReference type="GO" id="GO:0005634">
    <property type="term" value="C:nucleus"/>
    <property type="evidence" value="ECO:0007669"/>
    <property type="project" value="UniProtKB-SubCell"/>
</dbReference>
<dbReference type="GO" id="GO:0005525">
    <property type="term" value="F:GTP binding"/>
    <property type="evidence" value="ECO:0007669"/>
    <property type="project" value="UniProtKB-KW"/>
</dbReference>
<dbReference type="CDD" id="cd06223">
    <property type="entry name" value="PRTases_typeI"/>
    <property type="match status" value="1"/>
</dbReference>
<dbReference type="FunFam" id="3.40.50.2020:FF:000026">
    <property type="entry name" value="Uracil phosphoribosyltransferase homolog"/>
    <property type="match status" value="1"/>
</dbReference>
<dbReference type="Gene3D" id="3.40.50.2020">
    <property type="match status" value="1"/>
</dbReference>
<dbReference type="InterPro" id="IPR000836">
    <property type="entry name" value="PRibTrfase_dom"/>
</dbReference>
<dbReference type="InterPro" id="IPR029057">
    <property type="entry name" value="PRTase-like"/>
</dbReference>
<dbReference type="Pfam" id="PF14681">
    <property type="entry name" value="UPRTase"/>
    <property type="match status" value="1"/>
</dbReference>
<dbReference type="SUPFAM" id="SSF53271">
    <property type="entry name" value="PRTase-like"/>
    <property type="match status" value="1"/>
</dbReference>
<keyword id="KW-0963">Cytoplasm</keyword>
<keyword id="KW-0342">GTP-binding</keyword>
<keyword id="KW-0547">Nucleotide-binding</keyword>
<keyword id="KW-0539">Nucleus</keyword>
<keyword id="KW-1185">Reference proteome</keyword>
<gene>
    <name type="primary">UPRT</name>
    <name type="ORF">RCJMB04_25k2</name>
</gene>
<comment type="subcellular location">
    <subcellularLocation>
        <location>Cytoplasm</location>
    </subcellularLocation>
    <subcellularLocation>
        <location evidence="1">Nucleus</location>
    </subcellularLocation>
</comment>
<comment type="similarity">
    <text evidence="4">Belongs to the UPRTase family.</text>
</comment>
<comment type="caution">
    <text evidence="4">The uracil binding region known from UPRTases is missing.</text>
</comment>
<accession>Q5ZIJ8</accession>
<proteinExistence type="evidence at transcript level"/>
<name>UPP_CHICK</name>
<protein>
    <recommendedName>
        <fullName>Uracil phosphoribosyltransferase homolog</fullName>
    </recommendedName>
</protein>